<protein>
    <recommendedName>
        <fullName>Store-operated calcium entry-associated regulatory factor</fullName>
        <shortName>SARAF</shortName>
        <shortName>SOCE-associated regulatory factor</shortName>
    </recommendedName>
    <alternativeName>
        <fullName>Transmembrane protein 66</fullName>
    </alternativeName>
</protein>
<keyword id="KW-0106">Calcium</keyword>
<keyword id="KW-0109">Calcium transport</keyword>
<keyword id="KW-0256">Endoplasmic reticulum</keyword>
<keyword id="KW-0406">Ion transport</keyword>
<keyword id="KW-0472">Membrane</keyword>
<keyword id="KW-1185">Reference proteome</keyword>
<keyword id="KW-0732">Signal</keyword>
<keyword id="KW-0812">Transmembrane</keyword>
<keyword id="KW-1133">Transmembrane helix</keyword>
<keyword id="KW-0813">Transport</keyword>
<comment type="function">
    <text evidence="1">Negative regulator of store-operated Ca(2+) entry (SOCE) involved in protecting cells from Ca(2+) overfilling.</text>
</comment>
<comment type="subcellular location">
    <subcellularLocation>
        <location evidence="1">Endoplasmic reticulum membrane</location>
        <topology evidence="1">Single-pass type I membrane protein</topology>
    </subcellularLocation>
</comment>
<comment type="similarity">
    <text evidence="4">Belongs to the SARAF family.</text>
</comment>
<accession>Q54P59</accession>
<evidence type="ECO:0000250" key="1"/>
<evidence type="ECO:0000255" key="2"/>
<evidence type="ECO:0000256" key="3">
    <source>
        <dbReference type="SAM" id="MobiDB-lite"/>
    </source>
</evidence>
<evidence type="ECO:0000305" key="4"/>
<dbReference type="EMBL" id="AAFI02000071">
    <property type="protein sequence ID" value="EAL65041.1"/>
    <property type="molecule type" value="Genomic_DNA"/>
</dbReference>
<dbReference type="RefSeq" id="XP_638399.1">
    <property type="nucleotide sequence ID" value="XM_633307.1"/>
</dbReference>
<dbReference type="SMR" id="Q54P59"/>
<dbReference type="STRING" id="44689.Q54P59"/>
<dbReference type="PaxDb" id="44689-DDB0234076"/>
<dbReference type="EnsemblProtists" id="EAL65041">
    <property type="protein sequence ID" value="EAL65041"/>
    <property type="gene ID" value="DDB_G0284777"/>
</dbReference>
<dbReference type="GeneID" id="8624768"/>
<dbReference type="KEGG" id="ddi:DDB_G0284777"/>
<dbReference type="dictyBase" id="DDB_G0284777"/>
<dbReference type="VEuPathDB" id="AmoebaDB:DDB_G0284777"/>
<dbReference type="eggNOG" id="ENOG502QT6Y">
    <property type="taxonomic scope" value="Eukaryota"/>
</dbReference>
<dbReference type="HOGENOM" id="CLU_046802_1_1_1"/>
<dbReference type="InParanoid" id="Q54P59"/>
<dbReference type="OMA" id="DVQWRCD"/>
<dbReference type="PRO" id="PR:Q54P59"/>
<dbReference type="Proteomes" id="UP000002195">
    <property type="component" value="Chromosome 4"/>
</dbReference>
<dbReference type="GO" id="GO:0005789">
    <property type="term" value="C:endoplasmic reticulum membrane"/>
    <property type="evidence" value="ECO:0000318"/>
    <property type="project" value="GO_Central"/>
</dbReference>
<dbReference type="GO" id="GO:0006816">
    <property type="term" value="P:calcium ion transport"/>
    <property type="evidence" value="ECO:0007669"/>
    <property type="project" value="UniProtKB-KW"/>
</dbReference>
<dbReference type="GO" id="GO:2001256">
    <property type="term" value="P:regulation of store-operated calcium entry"/>
    <property type="evidence" value="ECO:0000318"/>
    <property type="project" value="GO_Central"/>
</dbReference>
<dbReference type="InterPro" id="IPR009567">
    <property type="entry name" value="SARAF"/>
</dbReference>
<dbReference type="PANTHER" id="PTHR15929">
    <property type="entry name" value="STORE-OPERATED CALCIUM ENTRY-ASSOCIATED REGULATORY FACTOR"/>
    <property type="match status" value="1"/>
</dbReference>
<dbReference type="PANTHER" id="PTHR15929:SF0">
    <property type="entry name" value="STORE-OPERATED CALCIUM ENTRY-ASSOCIATED REGULATORY FACTOR"/>
    <property type="match status" value="1"/>
</dbReference>
<dbReference type="Pfam" id="PF06682">
    <property type="entry name" value="SARAF"/>
    <property type="match status" value="1"/>
</dbReference>
<organism>
    <name type="scientific">Dictyostelium discoideum</name>
    <name type="common">Social amoeba</name>
    <dbReference type="NCBI Taxonomy" id="44689"/>
    <lineage>
        <taxon>Eukaryota</taxon>
        <taxon>Amoebozoa</taxon>
        <taxon>Evosea</taxon>
        <taxon>Eumycetozoa</taxon>
        <taxon>Dictyostelia</taxon>
        <taxon>Dictyosteliales</taxon>
        <taxon>Dictyosteliaceae</taxon>
        <taxon>Dictyostelium</taxon>
    </lineage>
</organism>
<feature type="signal peptide" evidence="2">
    <location>
        <begin position="1"/>
        <end position="25"/>
    </location>
</feature>
<feature type="chain" id="PRO_0000328115" description="Store-operated calcium entry-associated regulatory factor">
    <location>
        <begin position="26"/>
        <end position="320"/>
    </location>
</feature>
<feature type="topological domain" description="Lumenal" evidence="2">
    <location>
        <begin position="26"/>
        <end position="157"/>
    </location>
</feature>
<feature type="transmembrane region" description="Helical" evidence="2">
    <location>
        <begin position="158"/>
        <end position="178"/>
    </location>
</feature>
<feature type="topological domain" description="Cytoplasmic" evidence="2">
    <location>
        <begin position="179"/>
        <end position="320"/>
    </location>
</feature>
<feature type="region of interest" description="Disordered" evidence="3">
    <location>
        <begin position="186"/>
        <end position="231"/>
    </location>
</feature>
<feature type="region of interest" description="Disordered" evidence="3">
    <location>
        <begin position="285"/>
        <end position="320"/>
    </location>
</feature>
<feature type="compositionally biased region" description="Low complexity" evidence="3">
    <location>
        <begin position="189"/>
        <end position="231"/>
    </location>
</feature>
<feature type="compositionally biased region" description="Low complexity" evidence="3">
    <location>
        <begin position="285"/>
        <end position="300"/>
    </location>
</feature>
<feature type="compositionally biased region" description="Low complexity" evidence="3">
    <location>
        <begin position="307"/>
        <end position="320"/>
    </location>
</feature>
<reference key="1">
    <citation type="journal article" date="2005" name="Nature">
        <title>The genome of the social amoeba Dictyostelium discoideum.</title>
        <authorList>
            <person name="Eichinger L."/>
            <person name="Pachebat J.A."/>
            <person name="Gloeckner G."/>
            <person name="Rajandream M.A."/>
            <person name="Sucgang R."/>
            <person name="Berriman M."/>
            <person name="Song J."/>
            <person name="Olsen R."/>
            <person name="Szafranski K."/>
            <person name="Xu Q."/>
            <person name="Tunggal B."/>
            <person name="Kummerfeld S."/>
            <person name="Madera M."/>
            <person name="Konfortov B.A."/>
            <person name="Rivero F."/>
            <person name="Bankier A.T."/>
            <person name="Lehmann R."/>
            <person name="Hamlin N."/>
            <person name="Davies R."/>
            <person name="Gaudet P."/>
            <person name="Fey P."/>
            <person name="Pilcher K."/>
            <person name="Chen G."/>
            <person name="Saunders D."/>
            <person name="Sodergren E.J."/>
            <person name="Davis P."/>
            <person name="Kerhornou A."/>
            <person name="Nie X."/>
            <person name="Hall N."/>
            <person name="Anjard C."/>
            <person name="Hemphill L."/>
            <person name="Bason N."/>
            <person name="Farbrother P."/>
            <person name="Desany B."/>
            <person name="Just E."/>
            <person name="Morio T."/>
            <person name="Rost R."/>
            <person name="Churcher C.M."/>
            <person name="Cooper J."/>
            <person name="Haydock S."/>
            <person name="van Driessche N."/>
            <person name="Cronin A."/>
            <person name="Goodhead I."/>
            <person name="Muzny D.M."/>
            <person name="Mourier T."/>
            <person name="Pain A."/>
            <person name="Lu M."/>
            <person name="Harper D."/>
            <person name="Lindsay R."/>
            <person name="Hauser H."/>
            <person name="James K.D."/>
            <person name="Quiles M."/>
            <person name="Madan Babu M."/>
            <person name="Saito T."/>
            <person name="Buchrieser C."/>
            <person name="Wardroper A."/>
            <person name="Felder M."/>
            <person name="Thangavelu M."/>
            <person name="Johnson D."/>
            <person name="Knights A."/>
            <person name="Loulseged H."/>
            <person name="Mungall K.L."/>
            <person name="Oliver K."/>
            <person name="Price C."/>
            <person name="Quail M.A."/>
            <person name="Urushihara H."/>
            <person name="Hernandez J."/>
            <person name="Rabbinowitsch E."/>
            <person name="Steffen D."/>
            <person name="Sanders M."/>
            <person name="Ma J."/>
            <person name="Kohara Y."/>
            <person name="Sharp S."/>
            <person name="Simmonds M.N."/>
            <person name="Spiegler S."/>
            <person name="Tivey A."/>
            <person name="Sugano S."/>
            <person name="White B."/>
            <person name="Walker D."/>
            <person name="Woodward J.R."/>
            <person name="Winckler T."/>
            <person name="Tanaka Y."/>
            <person name="Shaulsky G."/>
            <person name="Schleicher M."/>
            <person name="Weinstock G.M."/>
            <person name="Rosenthal A."/>
            <person name="Cox E.C."/>
            <person name="Chisholm R.L."/>
            <person name="Gibbs R.A."/>
            <person name="Loomis W.F."/>
            <person name="Platzer M."/>
            <person name="Kay R.R."/>
            <person name="Williams J.G."/>
            <person name="Dear P.H."/>
            <person name="Noegel A.A."/>
            <person name="Barrell B.G."/>
            <person name="Kuspa A."/>
        </authorList>
    </citation>
    <scope>NUCLEOTIDE SEQUENCE [LARGE SCALE GENOMIC DNA]</scope>
    <source>
        <strain>AX4</strain>
    </source>
</reference>
<sequence>MKHNYYILFLILISSLFLSNKVVESYGHRNNNKGGDSKILLKDVQVLTLRSGEMTKARRSSPIQQMECIGGTATKELELYPKTIQCYNMGSNGVDVQWKCEATLDSTVRLGTIDVSCEGYSYPEDPYITADSCGVFYQLEYTNEQRRKAALAEEETSWVQIIFCIAFIGLILYAVFNWCGSPQGDDDSNTAQNNTATDNNYPGGFPGNNNNNNNNNNNSNNNNYGGNYQGYPNLNNNNNAGGCAQPNNGGGGGGGWFQPGLWTGLASGYLFGRIHSNRNHHHYYNPSPSYNRPRSSYSSGSSGGSGISSSSSSYSGTSRR</sequence>
<proteinExistence type="inferred from homology"/>
<name>SARAF_DICDI</name>
<gene>
    <name type="primary">saraf</name>
    <name type="synonym">tmem66</name>
    <name type="ORF">DDB_G0284777</name>
</gene>